<sequence length="564" mass="63909">GTYGYPTPAVKKIESYYDVPEGVDIRGRYDAEFAKILTKDALKFVADLQREFRNHIKYALECRREAKKKYNEGALPEFDPATTYIREQEWVCAPVPPAVADRKVEITGPVDRKMVINALNSGAKVFMADFEDALSPGWENLMRGQVNLKDAVAGTISLHDKARNRVYKLNDQTAKLFVRPRGWHLPEAHILIDGEPATGCLVDFGLYFYHSYSAFRRTQGAGFGPFFYLPKMEHSREAKIWNNVFEKAEKVAGIERGSIRATVLIETLPAVFQMNEILYELKDHSVGLNCGRWDYIFSYVKTFQAHPDRLLPDRVLVGMTQHFMKSYSDLLIRTCHRRGVHAMGGMAAQIPIKEDPVANEVALELVRKDKLREVKAGHDGTWAAHPGLIPACMEIFNNNMGNASNQIDTVKREDGANITEQDLLQIPRGARTMEGLRLNTRVGIQYVAAWLTGSGSVPLYNLMEDAATAEISRVQNWQWLKYGVELNGDGLGVKVNKELFGRVVEEEMARIEKEVGTEKFKEGMYKEACKIFTRQCTSPMLDDFLTLDAYNYIVVHHPRETSKL</sequence>
<organism>
    <name type="scientific">Glycine max</name>
    <name type="common">Soybean</name>
    <name type="synonym">Glycine hispida</name>
    <dbReference type="NCBI Taxonomy" id="3847"/>
    <lineage>
        <taxon>Eukaryota</taxon>
        <taxon>Viridiplantae</taxon>
        <taxon>Streptophyta</taxon>
        <taxon>Embryophyta</taxon>
        <taxon>Tracheophyta</taxon>
        <taxon>Spermatophyta</taxon>
        <taxon>Magnoliopsida</taxon>
        <taxon>eudicotyledons</taxon>
        <taxon>Gunneridae</taxon>
        <taxon>Pentapetalae</taxon>
        <taxon>rosids</taxon>
        <taxon>fabids</taxon>
        <taxon>Fabales</taxon>
        <taxon>Fabaceae</taxon>
        <taxon>Papilionoideae</taxon>
        <taxon>50 kb inversion clade</taxon>
        <taxon>NPAAA clade</taxon>
        <taxon>indigoferoid/millettioid clade</taxon>
        <taxon>Phaseoleae</taxon>
        <taxon>Glycine</taxon>
        <taxon>Glycine subgen. Soja</taxon>
    </lineage>
</organism>
<proteinExistence type="evidence at transcript level"/>
<feature type="chain" id="PRO_0000166873" description="Malate synthase, glyoxysomal">
    <location>
        <begin position="1" status="less than"/>
        <end position="564"/>
    </location>
</feature>
<feature type="short sequence motif" description="Microbody targeting signal" evidence="2">
    <location>
        <begin position="562"/>
        <end position="564"/>
    </location>
</feature>
<feature type="active site" description="Proton acceptor" evidence="1">
    <location>
        <position position="179"/>
    </location>
</feature>
<feature type="active site" description="Proton donor" evidence="1">
    <location>
        <position position="465"/>
    </location>
</feature>
<feature type="non-terminal residue">
    <location>
        <position position="1"/>
    </location>
</feature>
<dbReference type="EC" id="2.3.3.9"/>
<dbReference type="EMBL" id="L01629">
    <property type="protein sequence ID" value="AAC37465.1"/>
    <property type="molecule type" value="mRNA"/>
</dbReference>
<dbReference type="PIR" id="T07690">
    <property type="entry name" value="T07690"/>
</dbReference>
<dbReference type="SMR" id="P45458"/>
<dbReference type="FunCoup" id="P45458">
    <property type="interactions" value="487"/>
</dbReference>
<dbReference type="STRING" id="3847.P45458"/>
<dbReference type="PaxDb" id="3847-GLYMA17G13730.1"/>
<dbReference type="eggNOG" id="KOG1261">
    <property type="taxonomic scope" value="Eukaryota"/>
</dbReference>
<dbReference type="InParanoid" id="P45458"/>
<dbReference type="UniPathway" id="UPA00703">
    <property type="reaction ID" value="UER00720"/>
</dbReference>
<dbReference type="Proteomes" id="UP000008827">
    <property type="component" value="Unplaced"/>
</dbReference>
<dbReference type="GO" id="GO:0005737">
    <property type="term" value="C:cytoplasm"/>
    <property type="evidence" value="ECO:0000318"/>
    <property type="project" value="GO_Central"/>
</dbReference>
<dbReference type="GO" id="GO:0009514">
    <property type="term" value="C:glyoxysome"/>
    <property type="evidence" value="ECO:0007669"/>
    <property type="project" value="UniProtKB-SubCell"/>
</dbReference>
<dbReference type="GO" id="GO:0004474">
    <property type="term" value="F:malate synthase activity"/>
    <property type="evidence" value="ECO:0000318"/>
    <property type="project" value="GO_Central"/>
</dbReference>
<dbReference type="GO" id="GO:0006097">
    <property type="term" value="P:glyoxylate cycle"/>
    <property type="evidence" value="ECO:0000318"/>
    <property type="project" value="GO_Central"/>
</dbReference>
<dbReference type="GO" id="GO:0006099">
    <property type="term" value="P:tricarboxylic acid cycle"/>
    <property type="evidence" value="ECO:0007669"/>
    <property type="project" value="UniProtKB-KW"/>
</dbReference>
<dbReference type="CDD" id="cd00727">
    <property type="entry name" value="malate_synt_A"/>
    <property type="match status" value="1"/>
</dbReference>
<dbReference type="FunFam" id="1.20.1220.12:FF:000001">
    <property type="entry name" value="Malate synthase"/>
    <property type="match status" value="1"/>
</dbReference>
<dbReference type="FunFam" id="3.20.20.360:FF:000001">
    <property type="entry name" value="Malate synthase"/>
    <property type="match status" value="1"/>
</dbReference>
<dbReference type="Gene3D" id="3.20.20.360">
    <property type="entry name" value="Malate synthase, domain 3"/>
    <property type="match status" value="1"/>
</dbReference>
<dbReference type="Gene3D" id="1.20.1220.12">
    <property type="entry name" value="Malate synthase, domain III"/>
    <property type="match status" value="1"/>
</dbReference>
<dbReference type="InterPro" id="IPR044856">
    <property type="entry name" value="Malate_synth_C_sf"/>
</dbReference>
<dbReference type="InterPro" id="IPR011076">
    <property type="entry name" value="Malate_synth_sf"/>
</dbReference>
<dbReference type="InterPro" id="IPR006252">
    <property type="entry name" value="Malate_synthA"/>
</dbReference>
<dbReference type="InterPro" id="IPR019830">
    <property type="entry name" value="Malate_synthase_CS"/>
</dbReference>
<dbReference type="InterPro" id="IPR001465">
    <property type="entry name" value="Malate_synthase_TIM"/>
</dbReference>
<dbReference type="InterPro" id="IPR048355">
    <property type="entry name" value="MS_C"/>
</dbReference>
<dbReference type="InterPro" id="IPR048356">
    <property type="entry name" value="MS_N"/>
</dbReference>
<dbReference type="InterPro" id="IPR046363">
    <property type="entry name" value="MS_N_TIM-barrel_dom"/>
</dbReference>
<dbReference type="NCBIfam" id="TIGR01344">
    <property type="entry name" value="malate_syn_A"/>
    <property type="match status" value="1"/>
</dbReference>
<dbReference type="PANTHER" id="PTHR42902">
    <property type="entry name" value="MALATE SYNTHASE"/>
    <property type="match status" value="1"/>
</dbReference>
<dbReference type="PANTHER" id="PTHR42902:SF1">
    <property type="entry name" value="MALATE SYNTHASE 1-RELATED"/>
    <property type="match status" value="1"/>
</dbReference>
<dbReference type="Pfam" id="PF20659">
    <property type="entry name" value="MS_C"/>
    <property type="match status" value="1"/>
</dbReference>
<dbReference type="Pfam" id="PF20656">
    <property type="entry name" value="MS_N"/>
    <property type="match status" value="1"/>
</dbReference>
<dbReference type="Pfam" id="PF01274">
    <property type="entry name" value="MS_TIM-barrel"/>
    <property type="match status" value="1"/>
</dbReference>
<dbReference type="PIRSF" id="PIRSF001363">
    <property type="entry name" value="Malate_synth"/>
    <property type="match status" value="1"/>
</dbReference>
<dbReference type="SUPFAM" id="SSF51645">
    <property type="entry name" value="Malate synthase G"/>
    <property type="match status" value="1"/>
</dbReference>
<dbReference type="PROSITE" id="PS00510">
    <property type="entry name" value="MALATE_SYNTHASE"/>
    <property type="match status" value="1"/>
</dbReference>
<name>MASY_SOYBN</name>
<accession>P45458</accession>
<protein>
    <recommendedName>
        <fullName>Malate synthase, glyoxysomal</fullName>
        <shortName>MS</shortName>
        <ecNumber>2.3.3.9</ecNumber>
    </recommendedName>
</protein>
<comment type="catalytic activity">
    <reaction>
        <text>glyoxylate + acetyl-CoA + H2O = (S)-malate + CoA + H(+)</text>
        <dbReference type="Rhea" id="RHEA:18181"/>
        <dbReference type="ChEBI" id="CHEBI:15377"/>
        <dbReference type="ChEBI" id="CHEBI:15378"/>
        <dbReference type="ChEBI" id="CHEBI:15589"/>
        <dbReference type="ChEBI" id="CHEBI:36655"/>
        <dbReference type="ChEBI" id="CHEBI:57287"/>
        <dbReference type="ChEBI" id="CHEBI:57288"/>
        <dbReference type="EC" id="2.3.3.9"/>
    </reaction>
</comment>
<comment type="pathway">
    <text>Carbohydrate metabolism; glyoxylate cycle; (S)-malate from isocitrate: step 2/2.</text>
</comment>
<comment type="subcellular location">
    <subcellularLocation>
        <location>Glyoxysome</location>
    </subcellularLocation>
</comment>
<comment type="similarity">
    <text evidence="3">Belongs to the malate synthase family.</text>
</comment>
<evidence type="ECO:0000250" key="1"/>
<evidence type="ECO:0000255" key="2"/>
<evidence type="ECO:0000305" key="3"/>
<reference key="1">
    <citation type="journal article" date="1995" name="Planta">
        <title>Glyoxysomal malate dehydrogenase and malate synthase from soybean cotyledons (Glycine max L.): enzyme association, antibody production and cDNA cloning.</title>
        <authorList>
            <person name="Guex N."/>
            <person name="Henry H."/>
            <person name="Flach J."/>
            <person name="Richter H."/>
            <person name="Widmer F."/>
        </authorList>
    </citation>
    <scope>NUCLEOTIDE SEQUENCE [MRNA]</scope>
    <source>
        <strain>cv. Maple Arrow</strain>
        <tissue>Cotyledon</tissue>
    </source>
</reference>
<keyword id="KW-0329">Glyoxylate bypass</keyword>
<keyword id="KW-0330">Glyoxysome</keyword>
<keyword id="KW-0576">Peroxisome</keyword>
<keyword id="KW-1185">Reference proteome</keyword>
<keyword id="KW-0808">Transferase</keyword>
<keyword id="KW-0816">Tricarboxylic acid cycle</keyword>